<feature type="chain" id="PRO_1000121886" description="Glutamate-1-semialdehyde 2,1-aminomutase">
    <location>
        <begin position="1"/>
        <end position="426"/>
    </location>
</feature>
<feature type="modified residue" description="N6-(pyridoxal phosphate)lysine" evidence="1">
    <location>
        <position position="265"/>
    </location>
</feature>
<comment type="catalytic activity">
    <reaction evidence="1">
        <text>(S)-4-amino-5-oxopentanoate = 5-aminolevulinate</text>
        <dbReference type="Rhea" id="RHEA:14265"/>
        <dbReference type="ChEBI" id="CHEBI:57501"/>
        <dbReference type="ChEBI" id="CHEBI:356416"/>
        <dbReference type="EC" id="5.4.3.8"/>
    </reaction>
</comment>
<comment type="cofactor">
    <cofactor evidence="1">
        <name>pyridoxal 5'-phosphate</name>
        <dbReference type="ChEBI" id="CHEBI:597326"/>
    </cofactor>
</comment>
<comment type="pathway">
    <text evidence="1">Porphyrin-containing compound metabolism; protoporphyrin-IX biosynthesis; 5-aminolevulinate from L-glutamyl-tRNA(Glu): step 2/2.</text>
</comment>
<comment type="subunit">
    <text evidence="1">Homodimer.</text>
</comment>
<comment type="subcellular location">
    <subcellularLocation>
        <location evidence="1">Cytoplasm</location>
    </subcellularLocation>
</comment>
<comment type="similarity">
    <text evidence="1">Belongs to the class-III pyridoxal-phosphate-dependent aminotransferase family. HemL subfamily.</text>
</comment>
<gene>
    <name evidence="1" type="primary">hemL</name>
    <name type="ordered locus">EcSMS35_0166</name>
</gene>
<accession>B1LGV7</accession>
<dbReference type="EC" id="5.4.3.8" evidence="1"/>
<dbReference type="EMBL" id="CP000970">
    <property type="protein sequence ID" value="ACB16262.1"/>
    <property type="molecule type" value="Genomic_DNA"/>
</dbReference>
<dbReference type="RefSeq" id="WP_000045305.1">
    <property type="nucleotide sequence ID" value="NC_010498.1"/>
</dbReference>
<dbReference type="SMR" id="B1LGV7"/>
<dbReference type="KEGG" id="ecm:EcSMS35_0166"/>
<dbReference type="HOGENOM" id="CLU_016922_1_5_6"/>
<dbReference type="UniPathway" id="UPA00251">
    <property type="reaction ID" value="UER00317"/>
</dbReference>
<dbReference type="Proteomes" id="UP000007011">
    <property type="component" value="Chromosome"/>
</dbReference>
<dbReference type="GO" id="GO:0005737">
    <property type="term" value="C:cytoplasm"/>
    <property type="evidence" value="ECO:0007669"/>
    <property type="project" value="UniProtKB-SubCell"/>
</dbReference>
<dbReference type="GO" id="GO:0042286">
    <property type="term" value="F:glutamate-1-semialdehyde 2,1-aminomutase activity"/>
    <property type="evidence" value="ECO:0007669"/>
    <property type="project" value="UniProtKB-UniRule"/>
</dbReference>
<dbReference type="GO" id="GO:0030170">
    <property type="term" value="F:pyridoxal phosphate binding"/>
    <property type="evidence" value="ECO:0007669"/>
    <property type="project" value="InterPro"/>
</dbReference>
<dbReference type="GO" id="GO:0008483">
    <property type="term" value="F:transaminase activity"/>
    <property type="evidence" value="ECO:0007669"/>
    <property type="project" value="InterPro"/>
</dbReference>
<dbReference type="GO" id="GO:0006782">
    <property type="term" value="P:protoporphyrinogen IX biosynthetic process"/>
    <property type="evidence" value="ECO:0007669"/>
    <property type="project" value="UniProtKB-UniRule"/>
</dbReference>
<dbReference type="CDD" id="cd00610">
    <property type="entry name" value="OAT_like"/>
    <property type="match status" value="1"/>
</dbReference>
<dbReference type="FunFam" id="3.40.640.10:FF:000021">
    <property type="entry name" value="Glutamate-1-semialdehyde 2,1-aminomutase"/>
    <property type="match status" value="1"/>
</dbReference>
<dbReference type="FunFam" id="3.90.1150.10:FF:000012">
    <property type="entry name" value="Glutamate-1-semialdehyde 2,1-aminomutase"/>
    <property type="match status" value="1"/>
</dbReference>
<dbReference type="Gene3D" id="3.90.1150.10">
    <property type="entry name" value="Aspartate Aminotransferase, domain 1"/>
    <property type="match status" value="1"/>
</dbReference>
<dbReference type="Gene3D" id="3.40.640.10">
    <property type="entry name" value="Type I PLP-dependent aspartate aminotransferase-like (Major domain)"/>
    <property type="match status" value="1"/>
</dbReference>
<dbReference type="HAMAP" id="MF_00375">
    <property type="entry name" value="HemL_aminotrans_3"/>
    <property type="match status" value="1"/>
</dbReference>
<dbReference type="InterPro" id="IPR004639">
    <property type="entry name" value="4pyrrol_synth_GluAld_NH2Trfase"/>
</dbReference>
<dbReference type="InterPro" id="IPR005814">
    <property type="entry name" value="Aminotrans_3"/>
</dbReference>
<dbReference type="InterPro" id="IPR049704">
    <property type="entry name" value="Aminotrans_3_PPA_site"/>
</dbReference>
<dbReference type="InterPro" id="IPR015424">
    <property type="entry name" value="PyrdxlP-dep_Trfase"/>
</dbReference>
<dbReference type="InterPro" id="IPR015421">
    <property type="entry name" value="PyrdxlP-dep_Trfase_major"/>
</dbReference>
<dbReference type="InterPro" id="IPR015422">
    <property type="entry name" value="PyrdxlP-dep_Trfase_small"/>
</dbReference>
<dbReference type="NCBIfam" id="TIGR00713">
    <property type="entry name" value="hemL"/>
    <property type="match status" value="1"/>
</dbReference>
<dbReference type="NCBIfam" id="NF000818">
    <property type="entry name" value="PRK00062.1"/>
    <property type="match status" value="1"/>
</dbReference>
<dbReference type="PANTHER" id="PTHR43713">
    <property type="entry name" value="GLUTAMATE-1-SEMIALDEHYDE 2,1-AMINOMUTASE"/>
    <property type="match status" value="1"/>
</dbReference>
<dbReference type="PANTHER" id="PTHR43713:SF3">
    <property type="entry name" value="GLUTAMATE-1-SEMIALDEHYDE 2,1-AMINOMUTASE 1, CHLOROPLASTIC-RELATED"/>
    <property type="match status" value="1"/>
</dbReference>
<dbReference type="Pfam" id="PF00202">
    <property type="entry name" value="Aminotran_3"/>
    <property type="match status" value="1"/>
</dbReference>
<dbReference type="SUPFAM" id="SSF53383">
    <property type="entry name" value="PLP-dependent transferases"/>
    <property type="match status" value="1"/>
</dbReference>
<dbReference type="PROSITE" id="PS00600">
    <property type="entry name" value="AA_TRANSFER_CLASS_3"/>
    <property type="match status" value="1"/>
</dbReference>
<sequence length="426" mass="45340">MSKSENLYSAARELIPGGVNSPVRAFTGVGGTPLFIEKADGAYLYDVDGKAYIDYVGSWGPMVLGHNHPAIRNAVIEAAERGLSFGAPTEMEVKMAQLVTELVPTMDMVRMVNSGTEATMSAIRLARGFTGRDKIIKFEGCYHGHADCLLVKAGSGALTLGQPNSPGVPADFAKHTLTCTYNDLASVRAAFEQYPQEIACIIVEPVAGNMNCVPPLPEFLPGLRALCDEFGALLIIDEVMTGFRVALAGAQDYYGVVPDLTCLGKIIGGGMPVGAFGGRRDVMDALAPTGPVYQAGTLSGNPIAMAAGFACLNEVAQPGVHETLDELTTRLAEGLLEAAEEAGIPLVVNHVGGMFGIFFTDAESVTCYQDVMACDVERFKRFFHMMLDEGVYLAPSAFEAGFMSVAHSMEDINNTIDAARRVFAKL</sequence>
<name>GSA_ECOSM</name>
<proteinExistence type="inferred from homology"/>
<protein>
    <recommendedName>
        <fullName evidence="1">Glutamate-1-semialdehyde 2,1-aminomutase</fullName>
        <shortName evidence="1">GSA</shortName>
        <ecNumber evidence="1">5.4.3.8</ecNumber>
    </recommendedName>
    <alternativeName>
        <fullName evidence="1">Glutamate-1-semialdehyde aminotransferase</fullName>
        <shortName evidence="1">GSA-AT</shortName>
    </alternativeName>
</protein>
<keyword id="KW-0963">Cytoplasm</keyword>
<keyword id="KW-0413">Isomerase</keyword>
<keyword id="KW-0627">Porphyrin biosynthesis</keyword>
<keyword id="KW-0663">Pyridoxal phosphate</keyword>
<organism>
    <name type="scientific">Escherichia coli (strain SMS-3-5 / SECEC)</name>
    <dbReference type="NCBI Taxonomy" id="439855"/>
    <lineage>
        <taxon>Bacteria</taxon>
        <taxon>Pseudomonadati</taxon>
        <taxon>Pseudomonadota</taxon>
        <taxon>Gammaproteobacteria</taxon>
        <taxon>Enterobacterales</taxon>
        <taxon>Enterobacteriaceae</taxon>
        <taxon>Escherichia</taxon>
    </lineage>
</organism>
<evidence type="ECO:0000255" key="1">
    <source>
        <dbReference type="HAMAP-Rule" id="MF_00375"/>
    </source>
</evidence>
<reference key="1">
    <citation type="journal article" date="2008" name="J. Bacteriol.">
        <title>Insights into the environmental resistance gene pool from the genome sequence of the multidrug-resistant environmental isolate Escherichia coli SMS-3-5.</title>
        <authorList>
            <person name="Fricke W.F."/>
            <person name="Wright M.S."/>
            <person name="Lindell A.H."/>
            <person name="Harkins D.M."/>
            <person name="Baker-Austin C."/>
            <person name="Ravel J."/>
            <person name="Stepanauskas R."/>
        </authorList>
    </citation>
    <scope>NUCLEOTIDE SEQUENCE [LARGE SCALE GENOMIC DNA]</scope>
    <source>
        <strain>SMS-3-5 / SECEC</strain>
    </source>
</reference>